<proteinExistence type="inferred from homology"/>
<keyword id="KW-0067">ATP-binding</keyword>
<keyword id="KW-0315">Glutamine amidotransferase</keyword>
<keyword id="KW-0332">GMP biosynthesis</keyword>
<keyword id="KW-0436">Ligase</keyword>
<keyword id="KW-0547">Nucleotide-binding</keyword>
<keyword id="KW-0658">Purine biosynthesis</keyword>
<organism>
    <name type="scientific">Porphyromonas gingivalis (strain ATCC 33277 / DSM 20709 / CIP 103683 / JCM 12257 / NCTC 11834 / 2561)</name>
    <dbReference type="NCBI Taxonomy" id="431947"/>
    <lineage>
        <taxon>Bacteria</taxon>
        <taxon>Pseudomonadati</taxon>
        <taxon>Bacteroidota</taxon>
        <taxon>Bacteroidia</taxon>
        <taxon>Bacteroidales</taxon>
        <taxon>Porphyromonadaceae</taxon>
        <taxon>Porphyromonas</taxon>
    </lineage>
</organism>
<protein>
    <recommendedName>
        <fullName evidence="1">GMP synthase [glutamine-hydrolyzing]</fullName>
        <ecNumber evidence="1">6.3.5.2</ecNumber>
    </recommendedName>
    <alternativeName>
        <fullName evidence="1">GMP synthetase</fullName>
    </alternativeName>
    <alternativeName>
        <fullName evidence="1">Glutamine amidotransferase</fullName>
    </alternativeName>
</protein>
<name>GUAA_PORG3</name>
<feature type="chain" id="PRO_1000120356" description="GMP synthase [glutamine-hydrolyzing]">
    <location>
        <begin position="1"/>
        <end position="506"/>
    </location>
</feature>
<feature type="domain" description="Glutamine amidotransferase type-1" evidence="1">
    <location>
        <begin position="4"/>
        <end position="192"/>
    </location>
</feature>
<feature type="domain" description="GMPS ATP-PPase" evidence="1">
    <location>
        <begin position="193"/>
        <end position="381"/>
    </location>
</feature>
<feature type="active site" description="Nucleophile" evidence="1">
    <location>
        <position position="79"/>
    </location>
</feature>
<feature type="active site" evidence="1">
    <location>
        <position position="167"/>
    </location>
</feature>
<feature type="active site" evidence="1">
    <location>
        <position position="169"/>
    </location>
</feature>
<feature type="binding site" evidence="1">
    <location>
        <begin position="220"/>
        <end position="226"/>
    </location>
    <ligand>
        <name>ATP</name>
        <dbReference type="ChEBI" id="CHEBI:30616"/>
    </ligand>
</feature>
<evidence type="ECO:0000255" key="1">
    <source>
        <dbReference type="HAMAP-Rule" id="MF_00344"/>
    </source>
</evidence>
<comment type="function">
    <text evidence="1">Catalyzes the synthesis of GMP from XMP.</text>
</comment>
<comment type="catalytic activity">
    <reaction evidence="1">
        <text>XMP + L-glutamine + ATP + H2O = GMP + L-glutamate + AMP + diphosphate + 2 H(+)</text>
        <dbReference type="Rhea" id="RHEA:11680"/>
        <dbReference type="ChEBI" id="CHEBI:15377"/>
        <dbReference type="ChEBI" id="CHEBI:15378"/>
        <dbReference type="ChEBI" id="CHEBI:29985"/>
        <dbReference type="ChEBI" id="CHEBI:30616"/>
        <dbReference type="ChEBI" id="CHEBI:33019"/>
        <dbReference type="ChEBI" id="CHEBI:57464"/>
        <dbReference type="ChEBI" id="CHEBI:58115"/>
        <dbReference type="ChEBI" id="CHEBI:58359"/>
        <dbReference type="ChEBI" id="CHEBI:456215"/>
        <dbReference type="EC" id="6.3.5.2"/>
    </reaction>
</comment>
<comment type="pathway">
    <text evidence="1">Purine metabolism; GMP biosynthesis; GMP from XMP (L-Gln route): step 1/1.</text>
</comment>
<comment type="subunit">
    <text evidence="1">Homodimer.</text>
</comment>
<dbReference type="EC" id="6.3.5.2" evidence="1"/>
<dbReference type="EMBL" id="AP009380">
    <property type="protein sequence ID" value="BAG33154.1"/>
    <property type="molecule type" value="Genomic_DNA"/>
</dbReference>
<dbReference type="RefSeq" id="WP_012457664.1">
    <property type="nucleotide sequence ID" value="NC_010729.1"/>
</dbReference>
<dbReference type="SMR" id="B2RIF9"/>
<dbReference type="MEROPS" id="C26.957"/>
<dbReference type="GeneID" id="29255861"/>
<dbReference type="KEGG" id="pgn:PGN_0635"/>
<dbReference type="eggNOG" id="COG0518">
    <property type="taxonomic scope" value="Bacteria"/>
</dbReference>
<dbReference type="eggNOG" id="COG0519">
    <property type="taxonomic scope" value="Bacteria"/>
</dbReference>
<dbReference type="HOGENOM" id="CLU_014340_0_5_10"/>
<dbReference type="OrthoDB" id="9802219at2"/>
<dbReference type="BioCyc" id="PGIN431947:G1G2V-698-MONOMER"/>
<dbReference type="UniPathway" id="UPA00189">
    <property type="reaction ID" value="UER00296"/>
</dbReference>
<dbReference type="Proteomes" id="UP000008842">
    <property type="component" value="Chromosome"/>
</dbReference>
<dbReference type="GO" id="GO:0005829">
    <property type="term" value="C:cytosol"/>
    <property type="evidence" value="ECO:0007669"/>
    <property type="project" value="TreeGrafter"/>
</dbReference>
<dbReference type="GO" id="GO:0005524">
    <property type="term" value="F:ATP binding"/>
    <property type="evidence" value="ECO:0007669"/>
    <property type="project" value="UniProtKB-UniRule"/>
</dbReference>
<dbReference type="GO" id="GO:0003921">
    <property type="term" value="F:GMP synthase activity"/>
    <property type="evidence" value="ECO:0007669"/>
    <property type="project" value="InterPro"/>
</dbReference>
<dbReference type="CDD" id="cd01742">
    <property type="entry name" value="GATase1_GMP_Synthase"/>
    <property type="match status" value="1"/>
</dbReference>
<dbReference type="CDD" id="cd01997">
    <property type="entry name" value="GMP_synthase_C"/>
    <property type="match status" value="1"/>
</dbReference>
<dbReference type="FunFam" id="3.30.300.10:FF:000002">
    <property type="entry name" value="GMP synthase [glutamine-hydrolyzing]"/>
    <property type="match status" value="1"/>
</dbReference>
<dbReference type="FunFam" id="3.40.50.620:FF:000001">
    <property type="entry name" value="GMP synthase [glutamine-hydrolyzing]"/>
    <property type="match status" value="1"/>
</dbReference>
<dbReference type="FunFam" id="3.40.50.880:FF:000001">
    <property type="entry name" value="GMP synthase [glutamine-hydrolyzing]"/>
    <property type="match status" value="1"/>
</dbReference>
<dbReference type="Gene3D" id="3.30.300.10">
    <property type="match status" value="1"/>
</dbReference>
<dbReference type="Gene3D" id="3.40.50.880">
    <property type="match status" value="1"/>
</dbReference>
<dbReference type="Gene3D" id="3.40.50.620">
    <property type="entry name" value="HUPs"/>
    <property type="match status" value="1"/>
</dbReference>
<dbReference type="HAMAP" id="MF_00344">
    <property type="entry name" value="GMP_synthase"/>
    <property type="match status" value="1"/>
</dbReference>
<dbReference type="InterPro" id="IPR029062">
    <property type="entry name" value="Class_I_gatase-like"/>
</dbReference>
<dbReference type="InterPro" id="IPR017926">
    <property type="entry name" value="GATASE"/>
</dbReference>
<dbReference type="InterPro" id="IPR001674">
    <property type="entry name" value="GMP_synth_C"/>
</dbReference>
<dbReference type="InterPro" id="IPR004739">
    <property type="entry name" value="GMP_synth_GATase"/>
</dbReference>
<dbReference type="InterPro" id="IPR022955">
    <property type="entry name" value="GMP_synthase"/>
</dbReference>
<dbReference type="InterPro" id="IPR025777">
    <property type="entry name" value="GMPS_ATP_PPase_dom"/>
</dbReference>
<dbReference type="InterPro" id="IPR022310">
    <property type="entry name" value="NAD/GMP_synthase"/>
</dbReference>
<dbReference type="InterPro" id="IPR014729">
    <property type="entry name" value="Rossmann-like_a/b/a_fold"/>
</dbReference>
<dbReference type="NCBIfam" id="TIGR00884">
    <property type="entry name" value="guaA_Cterm"/>
    <property type="match status" value="1"/>
</dbReference>
<dbReference type="NCBIfam" id="TIGR00888">
    <property type="entry name" value="guaA_Nterm"/>
    <property type="match status" value="1"/>
</dbReference>
<dbReference type="NCBIfam" id="NF000848">
    <property type="entry name" value="PRK00074.1"/>
    <property type="match status" value="1"/>
</dbReference>
<dbReference type="PANTHER" id="PTHR11922:SF2">
    <property type="entry name" value="GMP SYNTHASE [GLUTAMINE-HYDROLYZING]"/>
    <property type="match status" value="1"/>
</dbReference>
<dbReference type="PANTHER" id="PTHR11922">
    <property type="entry name" value="GMP SYNTHASE-RELATED"/>
    <property type="match status" value="1"/>
</dbReference>
<dbReference type="Pfam" id="PF00117">
    <property type="entry name" value="GATase"/>
    <property type="match status" value="1"/>
</dbReference>
<dbReference type="Pfam" id="PF00958">
    <property type="entry name" value="GMP_synt_C"/>
    <property type="match status" value="1"/>
</dbReference>
<dbReference type="Pfam" id="PF02540">
    <property type="entry name" value="NAD_synthase"/>
    <property type="match status" value="1"/>
</dbReference>
<dbReference type="PRINTS" id="PR00096">
    <property type="entry name" value="GATASE"/>
</dbReference>
<dbReference type="SUPFAM" id="SSF52402">
    <property type="entry name" value="Adenine nucleotide alpha hydrolases-like"/>
    <property type="match status" value="1"/>
</dbReference>
<dbReference type="SUPFAM" id="SSF52317">
    <property type="entry name" value="Class I glutamine amidotransferase-like"/>
    <property type="match status" value="1"/>
</dbReference>
<dbReference type="SUPFAM" id="SSF54810">
    <property type="entry name" value="GMP synthetase C-terminal dimerisation domain"/>
    <property type="match status" value="1"/>
</dbReference>
<dbReference type="PROSITE" id="PS51273">
    <property type="entry name" value="GATASE_TYPE_1"/>
    <property type="match status" value="1"/>
</dbReference>
<dbReference type="PROSITE" id="PS51553">
    <property type="entry name" value="GMPS_ATP_PPASE"/>
    <property type="match status" value="1"/>
</dbReference>
<sequence>MLEKLIILDFGSQTTQLIARRIRELNTYCEVYPYNKLPEDLSGVRGIILSGSPYSVYDSKAFRIELSELRGKLPLLGICYGAQSLVHQAGGKVEPCDSREYGRTHLTLRQPEDALLTGLQSGTTVWMSHGDTITSLPEGFEVIAGTEDVPNAAFRIRGEKTWGVQFHPEIYHSEEGTKLLGNFLDICGMKRDWTPASFIEATVQELRERLGDDKVILALSGGVDSSVVAVLLNKAIGRNLTCIFVDHGLLRKGEFERVLQDYEHLGLNVIGVNAKEKFFAALSGVTDPEQKRKIIGRGFIEVFDEEARKLKDIKWLGQGTIYPDVIESLSITGMVIKSHHNVGGLPERMNLRLVEPLRMLFKDEVRRVGLELGMMPHLIHRHPFPGPGLGIRILGEITEEKATILQNADDIYMSLMREWGLYDQVWQAGAILLPVRSVGVMGDERTYEYTVALRAVTSMDAMSADWVHLPYDFLAKVSNEIINKVRGVNRVVYDISSKPPSTIEWE</sequence>
<reference key="1">
    <citation type="journal article" date="2008" name="DNA Res.">
        <title>Determination of the genome sequence of Porphyromonas gingivalis strain ATCC 33277 and genomic comparison with strain W83 revealed extensive genome rearrangements in P. gingivalis.</title>
        <authorList>
            <person name="Naito M."/>
            <person name="Hirakawa H."/>
            <person name="Yamashita A."/>
            <person name="Ohara N."/>
            <person name="Shoji M."/>
            <person name="Yukitake H."/>
            <person name="Nakayama K."/>
            <person name="Toh H."/>
            <person name="Yoshimura F."/>
            <person name="Kuhara S."/>
            <person name="Hattori M."/>
            <person name="Hayashi T."/>
            <person name="Nakayama K."/>
        </authorList>
    </citation>
    <scope>NUCLEOTIDE SEQUENCE [LARGE SCALE GENOMIC DNA]</scope>
    <source>
        <strain>ATCC 33277 / DSM 20709 / CIP 103683 / JCM 12257 / NCTC 11834 / 2561</strain>
    </source>
</reference>
<accession>B2RIF9</accession>
<gene>
    <name evidence="1" type="primary">guaA</name>
    <name type="ordered locus">PGN_0635</name>
</gene>